<reference key="1">
    <citation type="journal article" date="1999" name="Peptides">
        <title>Conopeptides from Conus striatus and Conus textile by cDNA cloning.</title>
        <authorList>
            <person name="Lu B.-S."/>
            <person name="Yu F."/>
            <person name="Zhao D."/>
            <person name="Huang P.-T."/>
            <person name="Huang C.-F."/>
        </authorList>
    </citation>
    <scope>NUCLEOTIDE SEQUENCE [MRNA]</scope>
    <source>
        <tissue>Venom duct</tissue>
    </source>
</reference>
<reference key="2">
    <citation type="journal article" date="2005" name="Peptides">
        <title>Direct cDNA cloning of novel conopeptide precursors of the O-superfamily.</title>
        <authorList>
            <person name="Kauferstein S."/>
            <person name="Melaun C."/>
            <person name="Mebs D."/>
        </authorList>
    </citation>
    <scope>NUCLEOTIDE SEQUENCE [MRNA]</scope>
    <source>
        <tissue>Venom duct</tissue>
    </source>
</reference>
<reference key="3">
    <citation type="journal article" date="2001" name="Biochemistry">
        <title>Delta-conotoxin structure/function through a cladistic analysis.</title>
        <authorList>
            <person name="Bulaj G."/>
            <person name="DeLaCruz R."/>
            <person name="Azimi-Zonooz A."/>
            <person name="West P."/>
            <person name="Watkins M."/>
            <person name="Yoshikami D."/>
            <person name="Olivera B.M."/>
        </authorList>
    </citation>
    <scope>NUCLEOTIDE SEQUENCE [MRNA] OF 52-82</scope>
    <scope>PROTEIN SEQUENCE OF 52-82</scope>
    <scope>FUNCTION</scope>
    <scope>HYDROXYLATION AT PRO-65</scope>
    <scope>MASS SPECTROMETRY</scope>
    <scope>SYNTHESIS OF 52-82</scope>
    <scope>BIOASSAY</scope>
    <scope>SUBCELLULAR LOCATION</scope>
    <source>
        <tissue>Venom</tissue>
        <tissue>Venom duct</tissue>
    </source>
</reference>
<reference key="4">
    <citation type="journal article" date="2005" name="FEBS Lett.">
        <title>Molecular interaction of delta-conotoxins with voltage-gated sodium channels.</title>
        <authorList>
            <person name="Leipold E."/>
            <person name="Hansel A."/>
            <person name="Olivera B.M."/>
            <person name="Terlau H."/>
            <person name="Heinemann S.H."/>
        </authorList>
    </citation>
    <scope>FUNCTION</scope>
    <scope>INTERACTION WITH SODIUM CHANNELS</scope>
</reference>
<keyword id="KW-0165">Cleavage on pair of basic residues</keyword>
<keyword id="KW-0903">Direct protein sequencing</keyword>
<keyword id="KW-1015">Disulfide bond</keyword>
<keyword id="KW-0379">Hydroxylation</keyword>
<keyword id="KW-0872">Ion channel impairing toxin</keyword>
<keyword id="KW-0960">Knottin</keyword>
<keyword id="KW-0528">Neurotoxin</keyword>
<keyword id="KW-0638">Presynaptic neurotoxin</keyword>
<keyword id="KW-0964">Secreted</keyword>
<keyword id="KW-0732">Signal</keyword>
<keyword id="KW-0800">Toxin</keyword>
<keyword id="KW-0738">Voltage-gated sodium channel impairing toxin</keyword>
<proteinExistence type="evidence at protein level"/>
<feature type="signal peptide" evidence="2">
    <location>
        <begin position="1"/>
        <end position="22"/>
    </location>
</feature>
<feature type="propeptide" id="PRO_0000034938" evidence="3">
    <location>
        <begin position="23"/>
        <end position="51"/>
    </location>
</feature>
<feature type="peptide" id="PRO_0000034939" description="Delta-conotoxin SVIE">
    <location>
        <begin position="52"/>
        <end position="82"/>
    </location>
</feature>
<feature type="modified residue" description="4-hydroxyproline" evidence="3">
    <location>
        <position position="65"/>
    </location>
</feature>
<feature type="disulfide bond" evidence="1">
    <location>
        <begin position="54"/>
        <end position="69"/>
    </location>
</feature>
<feature type="disulfide bond" evidence="1">
    <location>
        <begin position="61"/>
        <end position="73"/>
    </location>
</feature>
<feature type="disulfide bond" evidence="1">
    <location>
        <begin position="68"/>
        <end position="77"/>
    </location>
</feature>
<feature type="sequence variant" description="Minor.">
    <original>D</original>
    <variation>E</variation>
    <location>
        <position position="52"/>
    </location>
</feature>
<feature type="sequence conflict" description="In Ref. 2; CAH64847." evidence="6" ref="2">
    <original>V</original>
    <variation>M</variation>
    <location>
        <position position="6"/>
    </location>
</feature>
<dbReference type="EMBL" id="AF146351">
    <property type="protein sequence ID" value="AAD31911.1"/>
    <property type="molecule type" value="mRNA"/>
</dbReference>
<dbReference type="EMBL" id="AJ851174">
    <property type="protein sequence ID" value="CAH64847.1"/>
    <property type="molecule type" value="mRNA"/>
</dbReference>
<dbReference type="ConoServer" id="867">
    <property type="toxin name" value="SVIE precursor"/>
</dbReference>
<dbReference type="GO" id="GO:0005576">
    <property type="term" value="C:extracellular region"/>
    <property type="evidence" value="ECO:0007669"/>
    <property type="project" value="UniProtKB-SubCell"/>
</dbReference>
<dbReference type="GO" id="GO:0044231">
    <property type="term" value="C:host cell presynaptic membrane"/>
    <property type="evidence" value="ECO:0007669"/>
    <property type="project" value="UniProtKB-KW"/>
</dbReference>
<dbReference type="GO" id="GO:0019871">
    <property type="term" value="F:sodium channel inhibitor activity"/>
    <property type="evidence" value="ECO:0007669"/>
    <property type="project" value="InterPro"/>
</dbReference>
<dbReference type="GO" id="GO:0090729">
    <property type="term" value="F:toxin activity"/>
    <property type="evidence" value="ECO:0007669"/>
    <property type="project" value="UniProtKB-KW"/>
</dbReference>
<dbReference type="InterPro" id="IPR004214">
    <property type="entry name" value="Conotoxin"/>
</dbReference>
<dbReference type="InterPro" id="IPR012322">
    <property type="entry name" value="Conotoxin_d-typ_CS"/>
</dbReference>
<dbReference type="InterPro" id="IPR012321">
    <property type="entry name" value="Conotoxin_omega-typ_CS"/>
</dbReference>
<dbReference type="Pfam" id="PF02950">
    <property type="entry name" value="Conotoxin"/>
    <property type="match status" value="1"/>
</dbReference>
<dbReference type="PROSITE" id="PS60005">
    <property type="entry name" value="DELTA_CONOTOXIN"/>
    <property type="match status" value="1"/>
</dbReference>
<evidence type="ECO:0000250" key="1"/>
<evidence type="ECO:0000255" key="2"/>
<evidence type="ECO:0000269" key="3">
    <source>
    </source>
</evidence>
<evidence type="ECO:0000269" key="4">
    <source>
    </source>
</evidence>
<evidence type="ECO:0000303" key="5">
    <source>
    </source>
</evidence>
<evidence type="ECO:0000305" key="6"/>
<evidence type="ECO:0000305" key="7">
    <source>
    </source>
</evidence>
<name>O16E_CONST</name>
<sequence length="82" mass="9217">MKLTCVMIVAVLFLTTWTFVTADDSRYGLKNLFPKARHEMKNPEASKLNKRDGCSSGGTFCGIHPGLCCSEFCFLWCITFID</sequence>
<accession>Q9XZK5</accession>
<accession>Q5K0D4</accession>
<comment type="function">
    <text evidence="1 3 4">Delta-conotoxins bind to site 6 of voltage-gated sodium channels (Nav) and inhibit the inactivation process (By similarity). Impairs rapid channel inactivation of Nav1.4/SCN4A (Kd=500 nM) (PubMed:15990094). Interacts with a conserved hydrophobic triad (YFV) in the domain-4 voltage sensor of sodium channels (PubMed:15990094). In vivo, injection of both native or synthetic peptide induces twitching of back limbs, running in circles, and spastic paralysis (PubMed:11683628).</text>
</comment>
<comment type="subcellular location">
    <subcellularLocation>
        <location evidence="3">Secreted</location>
    </subcellularLocation>
</comment>
<comment type="tissue specificity">
    <text evidence="7">Expressed by the venom duct.</text>
</comment>
<comment type="domain">
    <text evidence="1">The presence of a 'disulfide through disulfide knot' structurally defines this protein as a knottin.</text>
</comment>
<comment type="domain">
    <text>The cysteine framework is VI/VII (C-C-CC-C-C).</text>
</comment>
<comment type="mass spectrometry" mass="3320.0" method="Electrospray" evidence="3">
    <text>Sequence shown.</text>
</comment>
<comment type="mass spectrometry" mass="3343.0" method="Electrospray" evidence="3">
    <text>Variant Glu-52.</text>
</comment>
<comment type="similarity">
    <text evidence="6">Belongs to the conotoxin O1 superfamily.</text>
</comment>
<protein>
    <recommendedName>
        <fullName evidence="5">Delta-conotoxin SVIE</fullName>
        <shortName>Delta-SVIE</shortName>
    </recommendedName>
    <alternativeName>
        <fullName>Omega-conotoxin SO-6</fullName>
        <shortName>Omega-conotoxin SO6</shortName>
    </alternativeName>
    <alternativeName>
        <fullName>Omega-conotoxin-4</fullName>
    </alternativeName>
</protein>
<gene>
    <name type="primary">SO6</name>
</gene>
<organism>
    <name type="scientific">Conus striatus</name>
    <name type="common">Striated cone</name>
    <dbReference type="NCBI Taxonomy" id="6493"/>
    <lineage>
        <taxon>Eukaryota</taxon>
        <taxon>Metazoa</taxon>
        <taxon>Spiralia</taxon>
        <taxon>Lophotrochozoa</taxon>
        <taxon>Mollusca</taxon>
        <taxon>Gastropoda</taxon>
        <taxon>Caenogastropoda</taxon>
        <taxon>Neogastropoda</taxon>
        <taxon>Conoidea</taxon>
        <taxon>Conidae</taxon>
        <taxon>Conus</taxon>
        <taxon>Pionoconus</taxon>
    </lineage>
</organism>